<sequence length="120" mass="13430">MKQANRLTKREEYSQVLARGGTYIGPLAIMKTLPNNLELSRVGFIVSKKVGGAVERNRAKRILRESLRTTGLKQGWDIVFIARAKAATVKCAEMERVVKHLLGKAQILSKTDEKTSFKTD</sequence>
<protein>
    <recommendedName>
        <fullName evidence="1">Ribonuclease P protein component</fullName>
        <shortName evidence="1">RNase P protein</shortName>
        <shortName evidence="1">RNaseP protein</shortName>
        <ecNumber evidence="1">3.1.26.5</ecNumber>
    </recommendedName>
    <alternativeName>
        <fullName evidence="1">Protein C5</fullName>
    </alternativeName>
</protein>
<keyword id="KW-0255">Endonuclease</keyword>
<keyword id="KW-0378">Hydrolase</keyword>
<keyword id="KW-0540">Nuclease</keyword>
<keyword id="KW-0694">RNA-binding</keyword>
<keyword id="KW-0819">tRNA processing</keyword>
<gene>
    <name evidence="1" type="primary">rnpA</name>
    <name type="ordered locus">cbdbA1017</name>
</gene>
<feature type="chain" id="PRO_1000021404" description="Ribonuclease P protein component">
    <location>
        <begin position="1"/>
        <end position="120"/>
    </location>
</feature>
<dbReference type="EC" id="3.1.26.5" evidence="1"/>
<dbReference type="EMBL" id="AJ965256">
    <property type="protein sequence ID" value="CAI83127.1"/>
    <property type="molecule type" value="Genomic_DNA"/>
</dbReference>
<dbReference type="RefSeq" id="WP_011309478.1">
    <property type="nucleotide sequence ID" value="NC_007356.1"/>
</dbReference>
<dbReference type="SMR" id="Q3ZY16"/>
<dbReference type="KEGG" id="deh:cbdbA1017"/>
<dbReference type="HOGENOM" id="CLU_117179_9_2_0"/>
<dbReference type="Proteomes" id="UP000000433">
    <property type="component" value="Chromosome"/>
</dbReference>
<dbReference type="GO" id="GO:0030677">
    <property type="term" value="C:ribonuclease P complex"/>
    <property type="evidence" value="ECO:0007669"/>
    <property type="project" value="TreeGrafter"/>
</dbReference>
<dbReference type="GO" id="GO:0042781">
    <property type="term" value="F:3'-tRNA processing endoribonuclease activity"/>
    <property type="evidence" value="ECO:0007669"/>
    <property type="project" value="TreeGrafter"/>
</dbReference>
<dbReference type="GO" id="GO:0004526">
    <property type="term" value="F:ribonuclease P activity"/>
    <property type="evidence" value="ECO:0007669"/>
    <property type="project" value="UniProtKB-UniRule"/>
</dbReference>
<dbReference type="GO" id="GO:0000049">
    <property type="term" value="F:tRNA binding"/>
    <property type="evidence" value="ECO:0007669"/>
    <property type="project" value="UniProtKB-UniRule"/>
</dbReference>
<dbReference type="GO" id="GO:0001682">
    <property type="term" value="P:tRNA 5'-leader removal"/>
    <property type="evidence" value="ECO:0007669"/>
    <property type="project" value="UniProtKB-UniRule"/>
</dbReference>
<dbReference type="Gene3D" id="3.30.230.10">
    <property type="match status" value="1"/>
</dbReference>
<dbReference type="HAMAP" id="MF_00227">
    <property type="entry name" value="RNase_P"/>
    <property type="match status" value="1"/>
</dbReference>
<dbReference type="InterPro" id="IPR020568">
    <property type="entry name" value="Ribosomal_Su5_D2-typ_SF"/>
</dbReference>
<dbReference type="InterPro" id="IPR014721">
    <property type="entry name" value="Ribsml_uS5_D2-typ_fold_subgr"/>
</dbReference>
<dbReference type="InterPro" id="IPR000100">
    <property type="entry name" value="RNase_P"/>
</dbReference>
<dbReference type="InterPro" id="IPR020539">
    <property type="entry name" value="RNase_P_CS"/>
</dbReference>
<dbReference type="NCBIfam" id="TIGR00188">
    <property type="entry name" value="rnpA"/>
    <property type="match status" value="1"/>
</dbReference>
<dbReference type="PANTHER" id="PTHR33992">
    <property type="entry name" value="RIBONUCLEASE P PROTEIN COMPONENT"/>
    <property type="match status" value="1"/>
</dbReference>
<dbReference type="PANTHER" id="PTHR33992:SF1">
    <property type="entry name" value="RIBONUCLEASE P PROTEIN COMPONENT"/>
    <property type="match status" value="1"/>
</dbReference>
<dbReference type="Pfam" id="PF00825">
    <property type="entry name" value="Ribonuclease_P"/>
    <property type="match status" value="1"/>
</dbReference>
<dbReference type="SUPFAM" id="SSF54211">
    <property type="entry name" value="Ribosomal protein S5 domain 2-like"/>
    <property type="match status" value="1"/>
</dbReference>
<dbReference type="PROSITE" id="PS00648">
    <property type="entry name" value="RIBONUCLEASE_P"/>
    <property type="match status" value="1"/>
</dbReference>
<name>RNPA_DEHMC</name>
<reference key="1">
    <citation type="journal article" date="2005" name="Nat. Biotechnol.">
        <title>Genome sequence of the chlorinated compound-respiring bacterium Dehalococcoides species strain CBDB1.</title>
        <authorList>
            <person name="Kube M."/>
            <person name="Beck A."/>
            <person name="Zinder S.H."/>
            <person name="Kuhl H."/>
            <person name="Reinhardt R."/>
            <person name="Adrian L."/>
        </authorList>
    </citation>
    <scope>NUCLEOTIDE SEQUENCE [LARGE SCALE GENOMIC DNA]</scope>
    <source>
        <strain>CBDB1</strain>
    </source>
</reference>
<organism>
    <name type="scientific">Dehalococcoides mccartyi (strain CBDB1)</name>
    <dbReference type="NCBI Taxonomy" id="255470"/>
    <lineage>
        <taxon>Bacteria</taxon>
        <taxon>Bacillati</taxon>
        <taxon>Chloroflexota</taxon>
        <taxon>Dehalococcoidia</taxon>
        <taxon>Dehalococcoidales</taxon>
        <taxon>Dehalococcoidaceae</taxon>
        <taxon>Dehalococcoides</taxon>
    </lineage>
</organism>
<evidence type="ECO:0000255" key="1">
    <source>
        <dbReference type="HAMAP-Rule" id="MF_00227"/>
    </source>
</evidence>
<proteinExistence type="inferred from homology"/>
<comment type="function">
    <text evidence="1">RNaseP catalyzes the removal of the 5'-leader sequence from pre-tRNA to produce the mature 5'-terminus. It can also cleave other RNA substrates such as 4.5S RNA. The protein component plays an auxiliary but essential role in vivo by binding to the 5'-leader sequence and broadening the substrate specificity of the ribozyme.</text>
</comment>
<comment type="catalytic activity">
    <reaction evidence="1">
        <text>Endonucleolytic cleavage of RNA, removing 5'-extranucleotides from tRNA precursor.</text>
        <dbReference type="EC" id="3.1.26.5"/>
    </reaction>
</comment>
<comment type="subunit">
    <text evidence="1">Consists of a catalytic RNA component (M1 or rnpB) and a protein subunit.</text>
</comment>
<comment type="similarity">
    <text evidence="1">Belongs to the RnpA family.</text>
</comment>
<accession>Q3ZY16</accession>